<proteinExistence type="inferred from homology"/>
<protein>
    <recommendedName>
        <fullName evidence="1">Putative phosphoenolpyruvate synthase regulatory protein</fullName>
        <shortName evidence="1">PEP synthase regulatory protein</shortName>
        <shortName evidence="1">PSRP</shortName>
        <ecNumber evidence="1">2.7.11.33</ecNumber>
        <ecNumber evidence="1">2.7.4.28</ecNumber>
    </recommendedName>
    <alternativeName>
        <fullName evidence="1">Pyruvate, water dikinase regulatory protein</fullName>
    </alternativeName>
</protein>
<accession>A1WTK1</accession>
<dbReference type="EC" id="2.7.11.33" evidence="1"/>
<dbReference type="EC" id="2.7.4.28" evidence="1"/>
<dbReference type="EMBL" id="CP000544">
    <property type="protein sequence ID" value="ABM61013.1"/>
    <property type="molecule type" value="Genomic_DNA"/>
</dbReference>
<dbReference type="RefSeq" id="WP_011813036.1">
    <property type="nucleotide sequence ID" value="NC_008789.1"/>
</dbReference>
<dbReference type="SMR" id="A1WTK1"/>
<dbReference type="STRING" id="349124.Hhal_0219"/>
<dbReference type="KEGG" id="hha:Hhal_0219"/>
<dbReference type="eggNOG" id="COG1806">
    <property type="taxonomic scope" value="Bacteria"/>
</dbReference>
<dbReference type="HOGENOM" id="CLU_046206_1_0_6"/>
<dbReference type="OrthoDB" id="9782201at2"/>
<dbReference type="Proteomes" id="UP000000647">
    <property type="component" value="Chromosome"/>
</dbReference>
<dbReference type="GO" id="GO:0043531">
    <property type="term" value="F:ADP binding"/>
    <property type="evidence" value="ECO:0007669"/>
    <property type="project" value="UniProtKB-UniRule"/>
</dbReference>
<dbReference type="GO" id="GO:0005524">
    <property type="term" value="F:ATP binding"/>
    <property type="evidence" value="ECO:0007669"/>
    <property type="project" value="InterPro"/>
</dbReference>
<dbReference type="GO" id="GO:0016776">
    <property type="term" value="F:phosphotransferase activity, phosphate group as acceptor"/>
    <property type="evidence" value="ECO:0007669"/>
    <property type="project" value="UniProtKB-UniRule"/>
</dbReference>
<dbReference type="GO" id="GO:0004674">
    <property type="term" value="F:protein serine/threonine kinase activity"/>
    <property type="evidence" value="ECO:0007669"/>
    <property type="project" value="UniProtKB-UniRule"/>
</dbReference>
<dbReference type="HAMAP" id="MF_01062">
    <property type="entry name" value="PSRP"/>
    <property type="match status" value="1"/>
</dbReference>
<dbReference type="InterPro" id="IPR005177">
    <property type="entry name" value="Kinase-pyrophosphorylase"/>
</dbReference>
<dbReference type="InterPro" id="IPR026530">
    <property type="entry name" value="PSRP"/>
</dbReference>
<dbReference type="NCBIfam" id="NF003742">
    <property type="entry name" value="PRK05339.1"/>
    <property type="match status" value="1"/>
</dbReference>
<dbReference type="PANTHER" id="PTHR31756">
    <property type="entry name" value="PYRUVATE, PHOSPHATE DIKINASE REGULATORY PROTEIN 1, CHLOROPLASTIC"/>
    <property type="match status" value="1"/>
</dbReference>
<dbReference type="PANTHER" id="PTHR31756:SF3">
    <property type="entry name" value="PYRUVATE, PHOSPHATE DIKINASE REGULATORY PROTEIN 1, CHLOROPLASTIC"/>
    <property type="match status" value="1"/>
</dbReference>
<dbReference type="Pfam" id="PF03618">
    <property type="entry name" value="Kinase-PPPase"/>
    <property type="match status" value="1"/>
</dbReference>
<gene>
    <name type="ordered locus">Hhal_0219</name>
</gene>
<evidence type="ECO:0000255" key="1">
    <source>
        <dbReference type="HAMAP-Rule" id="MF_01062"/>
    </source>
</evidence>
<comment type="function">
    <text evidence="1">Bifunctional serine/threonine kinase and phosphorylase involved in the regulation of the phosphoenolpyruvate synthase (PEPS) by catalyzing its phosphorylation/dephosphorylation.</text>
</comment>
<comment type="catalytic activity">
    <reaction evidence="1">
        <text>[pyruvate, water dikinase] + ADP = [pyruvate, water dikinase]-phosphate + AMP + H(+)</text>
        <dbReference type="Rhea" id="RHEA:46020"/>
        <dbReference type="Rhea" id="RHEA-COMP:11425"/>
        <dbReference type="Rhea" id="RHEA-COMP:11426"/>
        <dbReference type="ChEBI" id="CHEBI:15378"/>
        <dbReference type="ChEBI" id="CHEBI:43176"/>
        <dbReference type="ChEBI" id="CHEBI:68546"/>
        <dbReference type="ChEBI" id="CHEBI:456215"/>
        <dbReference type="ChEBI" id="CHEBI:456216"/>
        <dbReference type="EC" id="2.7.11.33"/>
    </reaction>
</comment>
<comment type="catalytic activity">
    <reaction evidence="1">
        <text>[pyruvate, water dikinase]-phosphate + phosphate + H(+) = [pyruvate, water dikinase] + diphosphate</text>
        <dbReference type="Rhea" id="RHEA:48580"/>
        <dbReference type="Rhea" id="RHEA-COMP:11425"/>
        <dbReference type="Rhea" id="RHEA-COMP:11426"/>
        <dbReference type="ChEBI" id="CHEBI:15378"/>
        <dbReference type="ChEBI" id="CHEBI:33019"/>
        <dbReference type="ChEBI" id="CHEBI:43176"/>
        <dbReference type="ChEBI" id="CHEBI:43474"/>
        <dbReference type="ChEBI" id="CHEBI:68546"/>
        <dbReference type="EC" id="2.7.4.28"/>
    </reaction>
</comment>
<comment type="similarity">
    <text evidence="1">Belongs to the pyruvate, phosphate/water dikinase regulatory protein family. PSRP subfamily.</text>
</comment>
<organism>
    <name type="scientific">Halorhodospira halophila (strain DSM 244 / SL1)</name>
    <name type="common">Ectothiorhodospira halophila (strain DSM 244 / SL1)</name>
    <dbReference type="NCBI Taxonomy" id="349124"/>
    <lineage>
        <taxon>Bacteria</taxon>
        <taxon>Pseudomonadati</taxon>
        <taxon>Pseudomonadota</taxon>
        <taxon>Gammaproteobacteria</taxon>
        <taxon>Chromatiales</taxon>
        <taxon>Ectothiorhodospiraceae</taxon>
        <taxon>Halorhodospira</taxon>
    </lineage>
</organism>
<name>PSRP_HALHL</name>
<sequence length="273" mass="30740">MTDVRRVFFVSDRTGITAEALGHSLMTQFSVTTEQATIPFVDTAERARAALRRITAASAEDDHPPIVFSTIIDPEVLAVLRESEHIVLFDFFDTFIAPLERELEVPSNHVIGRSHGIADDSTYDVRIDAMNFALHHDDGATHQHYGRADVILVGVSRSGKTPASLYLALQFGVYAANYPLTDDDLIATRLPRALVSHRAKLFGLTIDPDRLHQIRSERRPNSRYAELRQCEYEVARAEAMFRREGIPYLDITTMSIEEISSTVIHQHALTRRV</sequence>
<feature type="chain" id="PRO_0000316680" description="Putative phosphoenolpyruvate synthase regulatory protein">
    <location>
        <begin position="1"/>
        <end position="273"/>
    </location>
</feature>
<feature type="binding site" evidence="1">
    <location>
        <begin position="154"/>
        <end position="161"/>
    </location>
    <ligand>
        <name>ADP</name>
        <dbReference type="ChEBI" id="CHEBI:456216"/>
    </ligand>
</feature>
<keyword id="KW-0418">Kinase</keyword>
<keyword id="KW-0547">Nucleotide-binding</keyword>
<keyword id="KW-1185">Reference proteome</keyword>
<keyword id="KW-0723">Serine/threonine-protein kinase</keyword>
<keyword id="KW-0808">Transferase</keyword>
<reference key="1">
    <citation type="submission" date="2006-12" db="EMBL/GenBank/DDBJ databases">
        <title>Complete sequence of Halorhodospira halophila SL1.</title>
        <authorList>
            <consortium name="US DOE Joint Genome Institute"/>
            <person name="Copeland A."/>
            <person name="Lucas S."/>
            <person name="Lapidus A."/>
            <person name="Barry K."/>
            <person name="Detter J.C."/>
            <person name="Glavina del Rio T."/>
            <person name="Hammon N."/>
            <person name="Israni S."/>
            <person name="Dalin E."/>
            <person name="Tice H."/>
            <person name="Pitluck S."/>
            <person name="Saunders E."/>
            <person name="Brettin T."/>
            <person name="Bruce D."/>
            <person name="Han C."/>
            <person name="Tapia R."/>
            <person name="Schmutz J."/>
            <person name="Larimer F."/>
            <person name="Land M."/>
            <person name="Hauser L."/>
            <person name="Kyrpides N."/>
            <person name="Mikhailova N."/>
            <person name="Hoff W."/>
            <person name="Richardson P."/>
        </authorList>
    </citation>
    <scope>NUCLEOTIDE SEQUENCE [LARGE SCALE GENOMIC DNA]</scope>
    <source>
        <strain>DSM 244 / SL1</strain>
    </source>
</reference>